<name>Y2272_MYCTU</name>
<organism>
    <name type="scientific">Mycobacterium tuberculosis (strain ATCC 25618 / H37Rv)</name>
    <dbReference type="NCBI Taxonomy" id="83332"/>
    <lineage>
        <taxon>Bacteria</taxon>
        <taxon>Bacillati</taxon>
        <taxon>Actinomycetota</taxon>
        <taxon>Actinomycetes</taxon>
        <taxon>Mycobacteriales</taxon>
        <taxon>Mycobacteriaceae</taxon>
        <taxon>Mycobacterium</taxon>
        <taxon>Mycobacterium tuberculosis complex</taxon>
    </lineage>
</organism>
<evidence type="ECO:0000255" key="1"/>
<evidence type="ECO:0000305" key="2"/>
<protein>
    <recommendedName>
        <fullName>Uncharacterized protein Rv2272</fullName>
    </recommendedName>
</protein>
<feature type="chain" id="PRO_0000103999" description="Uncharacterized protein Rv2272">
    <location>
        <begin position="1"/>
        <end position="122"/>
    </location>
</feature>
<feature type="transmembrane region" description="Helical" evidence="1">
    <location>
        <begin position="33"/>
        <end position="53"/>
    </location>
</feature>
<feature type="transmembrane region" description="Helical" evidence="1">
    <location>
        <begin position="58"/>
        <end position="78"/>
    </location>
</feature>
<feature type="transmembrane region" description="Helical" evidence="1">
    <location>
        <begin position="97"/>
        <end position="117"/>
    </location>
</feature>
<proteinExistence type="evidence at protein level"/>
<sequence>MADDSNDTATDVEPDYRFTLANERTFLAWQRTALGLLAAAVALVQLVPELTIPGARQVLGVVLAILAILTSGMGLLRWQQADRAMRRHLPLPRHPTPGYLAVGLCVVGVVALALVVAKAITG</sequence>
<comment type="subcellular location">
    <subcellularLocation>
        <location evidence="2">Cell membrane</location>
        <topology evidence="2">Multi-pass membrane protein</topology>
    </subcellularLocation>
</comment>
<comment type="similarity">
    <text evidence="2">To E.coli YidH.</text>
</comment>
<keyword id="KW-1003">Cell membrane</keyword>
<keyword id="KW-0472">Membrane</keyword>
<keyword id="KW-1185">Reference proteome</keyword>
<keyword id="KW-0812">Transmembrane</keyword>
<keyword id="KW-1133">Transmembrane helix</keyword>
<accession>P9WLF5</accession>
<accession>L0TAP7</accession>
<accession>P64969</accession>
<accession>Q50691</accession>
<reference key="1">
    <citation type="journal article" date="1998" name="Nature">
        <title>Deciphering the biology of Mycobacterium tuberculosis from the complete genome sequence.</title>
        <authorList>
            <person name="Cole S.T."/>
            <person name="Brosch R."/>
            <person name="Parkhill J."/>
            <person name="Garnier T."/>
            <person name="Churcher C.M."/>
            <person name="Harris D.E."/>
            <person name="Gordon S.V."/>
            <person name="Eiglmeier K."/>
            <person name="Gas S."/>
            <person name="Barry C.E. III"/>
            <person name="Tekaia F."/>
            <person name="Badcock K."/>
            <person name="Basham D."/>
            <person name="Brown D."/>
            <person name="Chillingworth T."/>
            <person name="Connor R."/>
            <person name="Davies R.M."/>
            <person name="Devlin K."/>
            <person name="Feltwell T."/>
            <person name="Gentles S."/>
            <person name="Hamlin N."/>
            <person name="Holroyd S."/>
            <person name="Hornsby T."/>
            <person name="Jagels K."/>
            <person name="Krogh A."/>
            <person name="McLean J."/>
            <person name="Moule S."/>
            <person name="Murphy L.D."/>
            <person name="Oliver S."/>
            <person name="Osborne J."/>
            <person name="Quail M.A."/>
            <person name="Rajandream M.A."/>
            <person name="Rogers J."/>
            <person name="Rutter S."/>
            <person name="Seeger K."/>
            <person name="Skelton S."/>
            <person name="Squares S."/>
            <person name="Squares R."/>
            <person name="Sulston J.E."/>
            <person name="Taylor K."/>
            <person name="Whitehead S."/>
            <person name="Barrell B.G."/>
        </authorList>
    </citation>
    <scope>NUCLEOTIDE SEQUENCE [LARGE SCALE GENOMIC DNA]</scope>
    <source>
        <strain>ATCC 25618 / H37Rv</strain>
    </source>
</reference>
<reference key="2">
    <citation type="journal article" date="2011" name="Mol. Cell. Proteomics">
        <title>Proteogenomic analysis of Mycobacterium tuberculosis by high resolution mass spectrometry.</title>
        <authorList>
            <person name="Kelkar D.S."/>
            <person name="Kumar D."/>
            <person name="Kumar P."/>
            <person name="Balakrishnan L."/>
            <person name="Muthusamy B."/>
            <person name="Yadav A.K."/>
            <person name="Shrivastava P."/>
            <person name="Marimuthu A."/>
            <person name="Anand S."/>
            <person name="Sundaram H."/>
            <person name="Kingsbury R."/>
            <person name="Harsha H.C."/>
            <person name="Nair B."/>
            <person name="Prasad T.S."/>
            <person name="Chauhan D.S."/>
            <person name="Katoch K."/>
            <person name="Katoch V.M."/>
            <person name="Kumar P."/>
            <person name="Chaerkady R."/>
            <person name="Ramachandran S."/>
            <person name="Dash D."/>
            <person name="Pandey A."/>
        </authorList>
    </citation>
    <scope>IDENTIFICATION BY MASS SPECTROMETRY [LARGE SCALE ANALYSIS]</scope>
    <source>
        <strain>ATCC 25618 / H37Rv</strain>
    </source>
</reference>
<gene>
    <name type="ordered locus">Rv2272</name>
    <name type="ORF">MTCY339.38c</name>
</gene>
<dbReference type="EMBL" id="AL123456">
    <property type="protein sequence ID" value="CCP45053.1"/>
    <property type="molecule type" value="Genomic_DNA"/>
</dbReference>
<dbReference type="PIR" id="D70730">
    <property type="entry name" value="D70730"/>
</dbReference>
<dbReference type="RefSeq" id="NP_216788.1">
    <property type="nucleotide sequence ID" value="NC_000962.3"/>
</dbReference>
<dbReference type="RefSeq" id="WP_003411674.1">
    <property type="nucleotide sequence ID" value="NZ_NVQJ01000008.1"/>
</dbReference>
<dbReference type="SMR" id="P9WLF5"/>
<dbReference type="STRING" id="83332.Rv2272"/>
<dbReference type="PaxDb" id="83332-Rv2272"/>
<dbReference type="DNASU" id="887459"/>
<dbReference type="GeneID" id="887459"/>
<dbReference type="KEGG" id="mtu:Rv2272"/>
<dbReference type="KEGG" id="mtv:RVBD_2272"/>
<dbReference type="TubercuList" id="Rv2272"/>
<dbReference type="eggNOG" id="COG2149">
    <property type="taxonomic scope" value="Bacteria"/>
</dbReference>
<dbReference type="InParanoid" id="P9WLF5"/>
<dbReference type="OrthoDB" id="582337at2"/>
<dbReference type="PhylomeDB" id="P9WLF5"/>
<dbReference type="Proteomes" id="UP000001584">
    <property type="component" value="Chromosome"/>
</dbReference>
<dbReference type="GO" id="GO:0005886">
    <property type="term" value="C:plasma membrane"/>
    <property type="evidence" value="ECO:0007669"/>
    <property type="project" value="UniProtKB-SubCell"/>
</dbReference>
<dbReference type="InterPro" id="IPR003807">
    <property type="entry name" value="DUF202"/>
</dbReference>
<dbReference type="InterPro" id="IPR052053">
    <property type="entry name" value="IM_YidH-like"/>
</dbReference>
<dbReference type="PANTHER" id="PTHR34187:SF2">
    <property type="entry name" value="DUF202 DOMAIN-CONTAINING PROTEIN"/>
    <property type="match status" value="1"/>
</dbReference>
<dbReference type="PANTHER" id="PTHR34187">
    <property type="entry name" value="FGR18P"/>
    <property type="match status" value="1"/>
</dbReference>
<dbReference type="Pfam" id="PF02656">
    <property type="entry name" value="DUF202"/>
    <property type="match status" value="1"/>
</dbReference>